<proteinExistence type="evidence at transcript level"/>
<sequence length="110" mass="12304">MKFVLLFGVLLVTLFSYSSAEMLDDFDQADEDELLSLIEKEEARKDCIPKHHECTSNKHGCCGGHLFKYKCQCTTVVTQSGEETERCFCGTPPHHKAAELVVGFGKKIFG</sequence>
<comment type="subcellular location">
    <subcellularLocation>
        <location evidence="1">Secreted</location>
    </subcellularLocation>
</comment>
<comment type="tissue specificity">
    <text>Expressed by the venom gland.</text>
</comment>
<comment type="domain">
    <text evidence="1">The presence of a 'disulfide through disulfide knot' structurally defines this protein as a knottin.</text>
</comment>
<comment type="similarity">
    <text evidence="3">Belongs to the neurotoxin 19 (CSTX) family. 03 subfamily.</text>
</comment>
<feature type="signal peptide" evidence="2">
    <location>
        <begin position="1"/>
        <end position="20"/>
    </location>
</feature>
<feature type="propeptide" id="PRO_0000401581" evidence="1">
    <location>
        <begin position="21"/>
        <end position="44"/>
    </location>
</feature>
<feature type="chain" id="PRO_0000401582" description="U1-lycotoxin-Ls1aa">
    <location>
        <begin position="45"/>
        <end position="110"/>
    </location>
</feature>
<feature type="disulfide bond" evidence="1">
    <location>
        <begin position="47"/>
        <end position="62"/>
    </location>
</feature>
<feature type="disulfide bond" evidence="1">
    <location>
        <begin position="54"/>
        <end position="71"/>
    </location>
</feature>
<feature type="disulfide bond" evidence="1">
    <location>
        <begin position="61"/>
        <end position="89"/>
    </location>
</feature>
<feature type="disulfide bond" evidence="1">
    <location>
        <begin position="73"/>
        <end position="87"/>
    </location>
</feature>
<dbReference type="EMBL" id="EU925966">
    <property type="protein sequence ID" value="ACI41298.1"/>
    <property type="molecule type" value="mRNA"/>
</dbReference>
<dbReference type="EMBL" id="FM863970">
    <property type="protein sequence ID" value="CAS03568.1"/>
    <property type="molecule type" value="mRNA"/>
</dbReference>
<dbReference type="SMR" id="B6DCN2"/>
<dbReference type="ArachnoServer" id="AS000915">
    <property type="toxin name" value="U1-lycotoxin-Ls1aa"/>
</dbReference>
<dbReference type="GO" id="GO:0005576">
    <property type="term" value="C:extracellular region"/>
    <property type="evidence" value="ECO:0007669"/>
    <property type="project" value="UniProtKB-SubCell"/>
</dbReference>
<dbReference type="GO" id="GO:0090729">
    <property type="term" value="F:toxin activity"/>
    <property type="evidence" value="ECO:0007669"/>
    <property type="project" value="UniProtKB-KW"/>
</dbReference>
<dbReference type="InterPro" id="IPR019553">
    <property type="entry name" value="Spider_toxin_CSTX_knottin"/>
</dbReference>
<dbReference type="InterPro" id="IPR011142">
    <property type="entry name" value="Spider_toxin_CSTX_Knottin_CS"/>
</dbReference>
<dbReference type="Pfam" id="PF10530">
    <property type="entry name" value="Toxin_35"/>
    <property type="match status" value="1"/>
</dbReference>
<dbReference type="PROSITE" id="PS60029">
    <property type="entry name" value="SPIDER_CSTX"/>
    <property type="match status" value="1"/>
</dbReference>
<name>TX143_LYCSI</name>
<protein>
    <recommendedName>
        <fullName>U1-lycotoxin-Ls1aa</fullName>
    </recommendedName>
    <alternativeName>
        <fullName>Toxin-like structure LSTX-A43</fullName>
    </alternativeName>
</protein>
<evidence type="ECO:0000250" key="1"/>
<evidence type="ECO:0000255" key="2"/>
<evidence type="ECO:0000305" key="3"/>
<keyword id="KW-1015">Disulfide bond</keyword>
<keyword id="KW-0960">Knottin</keyword>
<keyword id="KW-0964">Secreted</keyword>
<keyword id="KW-0732">Signal</keyword>
<keyword id="KW-0800">Toxin</keyword>
<accession>B6DCN2</accession>
<organism>
    <name type="scientific">Lycosa singoriensis</name>
    <name type="common">Wolf spider</name>
    <name type="synonym">Aranea singoriensis</name>
    <dbReference type="NCBI Taxonomy" id="434756"/>
    <lineage>
        <taxon>Eukaryota</taxon>
        <taxon>Metazoa</taxon>
        <taxon>Ecdysozoa</taxon>
        <taxon>Arthropoda</taxon>
        <taxon>Chelicerata</taxon>
        <taxon>Arachnida</taxon>
        <taxon>Araneae</taxon>
        <taxon>Araneomorphae</taxon>
        <taxon>Entelegynae</taxon>
        <taxon>Lycosoidea</taxon>
        <taxon>Lycosidae</taxon>
        <taxon>Lycosa</taxon>
    </lineage>
</organism>
<reference key="1">
    <citation type="journal article" date="2010" name="Zoology">
        <title>Transcriptome analysis of the venom glands of the Chinese wolf spider Lycosa singoriensis.</title>
        <authorList>
            <person name="Zhang Y."/>
            <person name="Chen J."/>
            <person name="Tang X."/>
            <person name="Wang F."/>
            <person name="Jiang L."/>
            <person name="Xiong X."/>
            <person name="Wang M."/>
            <person name="Rong M."/>
            <person name="Liu Z."/>
            <person name="Liang S."/>
        </authorList>
    </citation>
    <scope>NUCLEOTIDE SEQUENCE [LARGE SCALE MRNA]</scope>
    <source>
        <tissue>Venom gland</tissue>
    </source>
</reference>